<reference evidence="7" key="1">
    <citation type="journal article" date="1998" name="Science">
        <title>Genome sequence of the nematode C. elegans: a platform for investigating biology.</title>
        <authorList>
            <consortium name="The C. elegans sequencing consortium"/>
        </authorList>
    </citation>
    <scope>NUCLEOTIDE SEQUENCE [LARGE SCALE GENOMIC DNA]</scope>
    <source>
        <strain evidence="7">Bristol N2</strain>
    </source>
</reference>
<reference evidence="6" key="2">
    <citation type="journal article" date="2016" name="Dev. Biol.">
        <title>The Paired-box protein PAX-3 regulates the choice between lateral and ventral epidermal cell fates in C. elegans.</title>
        <authorList>
            <person name="Thompson K.W."/>
            <person name="Joshi P."/>
            <person name="Dymond J.S."/>
            <person name="Gorrepati L."/>
            <person name="Smith H.E."/>
            <person name="Krause M.W."/>
            <person name="Eisenmann D.M."/>
        </authorList>
    </citation>
    <scope>FUNCTION</scope>
    <scope>SUBCELLULAR LOCATION</scope>
    <scope>DEVELOPMENTAL STAGE</scope>
    <scope>DISRUPTION PHENOTYPE</scope>
    <scope>MUTAGENESIS OF PRO-29</scope>
</reference>
<accession>G5ED66</accession>
<evidence type="ECO:0000250" key="1">
    <source>
        <dbReference type="UniProtKB" id="P23760"/>
    </source>
</evidence>
<evidence type="ECO:0000255" key="2">
    <source>
        <dbReference type="PROSITE-ProRule" id="PRU00108"/>
    </source>
</evidence>
<evidence type="ECO:0000255" key="3">
    <source>
        <dbReference type="PROSITE-ProRule" id="PRU00381"/>
    </source>
</evidence>
<evidence type="ECO:0000256" key="4">
    <source>
        <dbReference type="SAM" id="MobiDB-lite"/>
    </source>
</evidence>
<evidence type="ECO:0000269" key="5">
    <source>
    </source>
</evidence>
<evidence type="ECO:0000305" key="6"/>
<evidence type="ECO:0000312" key="7">
    <source>
        <dbReference type="Proteomes" id="UP000001940"/>
    </source>
</evidence>
<evidence type="ECO:0000312" key="8">
    <source>
        <dbReference type="WormBase" id="F27E5.2"/>
    </source>
</evidence>
<proteinExistence type="evidence at protein level"/>
<keyword id="KW-0217">Developmental protein</keyword>
<keyword id="KW-0238">DNA-binding</keyword>
<keyword id="KW-0371">Homeobox</keyword>
<keyword id="KW-0539">Nucleus</keyword>
<keyword id="KW-0563">Paired box</keyword>
<keyword id="KW-1185">Reference proteome</keyword>
<keyword id="KW-0804">Transcription</keyword>
<keyword id="KW-0805">Transcription regulation</keyword>
<comment type="function">
    <text evidence="1 5">Transcriptional activator (By similarity). Regulates the lateral/ventral epidermal cell fate decision (PubMed:26953187).</text>
</comment>
<comment type="interaction">
    <interactant intactId="EBI-2416749">
        <id>G5ED66</id>
    </interactant>
    <interactant intactId="EBI-314716">
        <id>O02482</id>
        <label>unc-37</label>
    </interactant>
    <organismsDiffer>false</organismsDiffer>
    <experiments>5</experiments>
</comment>
<comment type="subcellular location">
    <subcellularLocation>
        <location evidence="2 3 5">Nucleus</location>
    </subcellularLocation>
</comment>
<comment type="developmental stage">
    <text evidence="5">Expressed throughout embryogenesis and early larval development, predominantly in hypodermal cells, especially ventral P cells and their descendants.</text>
</comment>
<comment type="disruption phenotype">
    <text evidence="5">RNAi-mediated knockdown causes embryonic lethality, vulval and gonad migration defects, and animals that survive have mild to severe body morphology defects (PubMed:26953187). A marker of the lateral hypodermal (seam cell) fate, scm, is expressed ectopically in some P cell nuclei during the early larval L1 stage (PubMed:26953187).</text>
</comment>
<comment type="similarity">
    <text evidence="6">Belongs to the paired homeobox family.</text>
</comment>
<gene>
    <name evidence="8" type="primary">pax-3</name>
    <name evidence="8" type="ORF">F27E5.2</name>
</gene>
<feature type="chain" id="PRO_0000453196" description="Paired box protein 3 homolog">
    <location>
        <begin position="1"/>
        <end position="308"/>
    </location>
</feature>
<feature type="DNA-binding region" description="Paired" evidence="3">
    <location>
        <begin position="13"/>
        <end position="140"/>
    </location>
</feature>
<feature type="DNA-binding region" description="Homeobox" evidence="2">
    <location>
        <begin position="187"/>
        <end position="246"/>
    </location>
</feature>
<feature type="region of interest" description="PAI subdomain" evidence="3">
    <location>
        <begin position="16"/>
        <end position="72"/>
    </location>
</feature>
<feature type="region of interest" description="RED subdomain" evidence="3">
    <location>
        <begin position="92"/>
        <end position="140"/>
    </location>
</feature>
<feature type="region of interest" description="Disordered" evidence="4">
    <location>
        <begin position="168"/>
        <end position="191"/>
    </location>
</feature>
<feature type="mutagenesis site" description="In ga96; causes defects in embryonic development, larval body morphology and vulval development. Adult hermaphrodites have gonad migration defects in which one or both arms of the developing gonad fail to turn correctly. Decrease in the number of ventral hypodermal cells (Pn.p cells) and in the number of ventral cord neurons (Pn.a cells). Ectopic expression of scm in P cells in 27% of animals raised at the restrictive temperature, 25 degrees Celsius." evidence="5">
    <original>P</original>
    <variation>L</variation>
    <location>
        <position position="29"/>
    </location>
</feature>
<sequence>MTTDSITFNHILGQGRVNQLGGVFINGRPLPIHVRHAIISMAKKGIKPCHISRQLKVSHGAVSKILNRYAETGSISPGQIGGSPRARLTVQAVEKEILIACDENPQMSAAELRDWLIHKDICTKGNAPTVPAIKRLIGNKGVGVPKKMERKRLSYSIDSILGISIDECSKSSSDDEEGSSPSNDASSRRNRTSFTAEQLDVLENAFRADTYPHANARESISKETGLSEEKIMTWFSNRRARCRKNMPMYQQYNVQGFGSSPPSYPTLLPSPMMFLPSYSTSPQLNPLFFQHILQSSPPSSQSSPPSSS</sequence>
<dbReference type="EMBL" id="BX284602">
    <property type="protein sequence ID" value="CAA88468.2"/>
    <property type="molecule type" value="Genomic_DNA"/>
</dbReference>
<dbReference type="PIR" id="T21461">
    <property type="entry name" value="T21461"/>
</dbReference>
<dbReference type="RefSeq" id="NP_496189.2">
    <property type="nucleotide sequence ID" value="NM_063788.3"/>
</dbReference>
<dbReference type="SMR" id="G5ED66"/>
<dbReference type="FunCoup" id="G5ED66">
    <property type="interactions" value="125"/>
</dbReference>
<dbReference type="IntAct" id="G5ED66">
    <property type="interactions" value="58"/>
</dbReference>
<dbReference type="STRING" id="6239.F27E5.2.1"/>
<dbReference type="PaxDb" id="6239-F27E5.2"/>
<dbReference type="EnsemblMetazoa" id="F27E5.2.1">
    <property type="protein sequence ID" value="F27E5.2.1"/>
    <property type="gene ID" value="WBGene00003939"/>
</dbReference>
<dbReference type="GeneID" id="185022"/>
<dbReference type="KEGG" id="cel:CELE_F27E5.2"/>
<dbReference type="AGR" id="WB:WBGene00003939"/>
<dbReference type="CTD" id="185022"/>
<dbReference type="WormBase" id="F27E5.2">
    <property type="protein sequence ID" value="CE35862"/>
    <property type="gene ID" value="WBGene00003939"/>
    <property type="gene designation" value="pax-3"/>
</dbReference>
<dbReference type="eggNOG" id="KOG0849">
    <property type="taxonomic scope" value="Eukaryota"/>
</dbReference>
<dbReference type="HOGENOM" id="CLU_019281_1_3_1"/>
<dbReference type="InParanoid" id="G5ED66"/>
<dbReference type="OMA" id="WCQNIGS"/>
<dbReference type="OrthoDB" id="3225452at2759"/>
<dbReference type="PhylomeDB" id="G5ED66"/>
<dbReference type="PRO" id="PR:G5ED66"/>
<dbReference type="Proteomes" id="UP000001940">
    <property type="component" value="Chromosome II"/>
</dbReference>
<dbReference type="Bgee" id="WBGene00003939">
    <property type="expression patterns" value="Expressed in embryo and 3 other cell types or tissues"/>
</dbReference>
<dbReference type="GO" id="GO:0005634">
    <property type="term" value="C:nucleus"/>
    <property type="evidence" value="ECO:0000314"/>
    <property type="project" value="UniProtKB"/>
</dbReference>
<dbReference type="GO" id="GO:0000981">
    <property type="term" value="F:DNA-binding transcription factor activity, RNA polymerase II-specific"/>
    <property type="evidence" value="ECO:0000318"/>
    <property type="project" value="GO_Central"/>
</dbReference>
<dbReference type="GO" id="GO:0000978">
    <property type="term" value="F:RNA polymerase II cis-regulatory region sequence-specific DNA binding"/>
    <property type="evidence" value="ECO:0000318"/>
    <property type="project" value="GO_Central"/>
</dbReference>
<dbReference type="GO" id="GO:0009957">
    <property type="term" value="P:epidermal cell fate specification"/>
    <property type="evidence" value="ECO:0000315"/>
    <property type="project" value="UniProtKB"/>
</dbReference>
<dbReference type="GO" id="GO:0035262">
    <property type="term" value="P:gonad morphogenesis"/>
    <property type="evidence" value="ECO:0000315"/>
    <property type="project" value="UniProtKB"/>
</dbReference>
<dbReference type="GO" id="GO:0031581">
    <property type="term" value="P:hemidesmosome assembly"/>
    <property type="evidence" value="ECO:0000316"/>
    <property type="project" value="WormBase"/>
</dbReference>
<dbReference type="GO" id="GO:0007399">
    <property type="term" value="P:nervous system development"/>
    <property type="evidence" value="ECO:0000318"/>
    <property type="project" value="GO_Central"/>
</dbReference>
<dbReference type="GO" id="GO:0006357">
    <property type="term" value="P:regulation of transcription by RNA polymerase II"/>
    <property type="evidence" value="ECO:0000318"/>
    <property type="project" value="GO_Central"/>
</dbReference>
<dbReference type="CDD" id="cd00086">
    <property type="entry name" value="homeodomain"/>
    <property type="match status" value="1"/>
</dbReference>
<dbReference type="CDD" id="cd00131">
    <property type="entry name" value="PAX"/>
    <property type="match status" value="1"/>
</dbReference>
<dbReference type="Gene3D" id="1.10.10.60">
    <property type="entry name" value="Homeodomain-like"/>
    <property type="match status" value="1"/>
</dbReference>
<dbReference type="Gene3D" id="1.10.10.10">
    <property type="entry name" value="Winged helix-like DNA-binding domain superfamily/Winged helix DNA-binding domain"/>
    <property type="match status" value="2"/>
</dbReference>
<dbReference type="InterPro" id="IPR001356">
    <property type="entry name" value="HD"/>
</dbReference>
<dbReference type="InterPro" id="IPR009057">
    <property type="entry name" value="Homeodomain-like_sf"/>
</dbReference>
<dbReference type="InterPro" id="IPR001523">
    <property type="entry name" value="Paired_dom"/>
</dbReference>
<dbReference type="InterPro" id="IPR043565">
    <property type="entry name" value="PAX_fam"/>
</dbReference>
<dbReference type="InterPro" id="IPR036388">
    <property type="entry name" value="WH-like_DNA-bd_sf"/>
</dbReference>
<dbReference type="PANTHER" id="PTHR45636:SF49">
    <property type="entry name" value="PAIRED BOX PROTEIN 3 HOMOLOG"/>
    <property type="match status" value="1"/>
</dbReference>
<dbReference type="PANTHER" id="PTHR45636">
    <property type="entry name" value="PAIRED BOX PROTEIN PAX-6-RELATED-RELATED"/>
    <property type="match status" value="1"/>
</dbReference>
<dbReference type="Pfam" id="PF00046">
    <property type="entry name" value="Homeodomain"/>
    <property type="match status" value="1"/>
</dbReference>
<dbReference type="Pfam" id="PF00292">
    <property type="entry name" value="PAX"/>
    <property type="match status" value="1"/>
</dbReference>
<dbReference type="PRINTS" id="PR00027">
    <property type="entry name" value="PAIREDBOX"/>
</dbReference>
<dbReference type="SMART" id="SM00389">
    <property type="entry name" value="HOX"/>
    <property type="match status" value="1"/>
</dbReference>
<dbReference type="SMART" id="SM00351">
    <property type="entry name" value="PAX"/>
    <property type="match status" value="1"/>
</dbReference>
<dbReference type="SUPFAM" id="SSF46689">
    <property type="entry name" value="Homeodomain-like"/>
    <property type="match status" value="2"/>
</dbReference>
<dbReference type="PROSITE" id="PS50071">
    <property type="entry name" value="HOMEOBOX_2"/>
    <property type="match status" value="1"/>
</dbReference>
<dbReference type="PROSITE" id="PS51057">
    <property type="entry name" value="PAIRED_2"/>
    <property type="match status" value="1"/>
</dbReference>
<name>PAX3H_CAEEL</name>
<organism evidence="7">
    <name type="scientific">Caenorhabditis elegans</name>
    <dbReference type="NCBI Taxonomy" id="6239"/>
    <lineage>
        <taxon>Eukaryota</taxon>
        <taxon>Metazoa</taxon>
        <taxon>Ecdysozoa</taxon>
        <taxon>Nematoda</taxon>
        <taxon>Chromadorea</taxon>
        <taxon>Rhabditida</taxon>
        <taxon>Rhabditina</taxon>
        <taxon>Rhabditomorpha</taxon>
        <taxon>Rhabditoidea</taxon>
        <taxon>Rhabditidae</taxon>
        <taxon>Peloderinae</taxon>
        <taxon>Caenorhabditis</taxon>
    </lineage>
</organism>
<protein>
    <recommendedName>
        <fullName evidence="6">Paired box protein 3 homolog</fullName>
    </recommendedName>
</protein>